<evidence type="ECO:0000255" key="1">
    <source>
        <dbReference type="HAMAP-Rule" id="MF_00652"/>
    </source>
</evidence>
<gene>
    <name evidence="1" type="primary">yaaA</name>
    <name type="ordered locus">SeAg_B0005</name>
</gene>
<reference key="1">
    <citation type="journal article" date="2011" name="J. Bacteriol.">
        <title>Comparative genomics of 28 Salmonella enterica isolates: evidence for CRISPR-mediated adaptive sublineage evolution.</title>
        <authorList>
            <person name="Fricke W.F."/>
            <person name="Mammel M.K."/>
            <person name="McDermott P.F."/>
            <person name="Tartera C."/>
            <person name="White D.G."/>
            <person name="Leclerc J.E."/>
            <person name="Ravel J."/>
            <person name="Cebula T.A."/>
        </authorList>
    </citation>
    <scope>NUCLEOTIDE SEQUENCE [LARGE SCALE GENOMIC DNA]</scope>
    <source>
        <strain>SL483</strain>
    </source>
</reference>
<feature type="chain" id="PRO_1000131136" description="UPF0246 protein YaaA">
    <location>
        <begin position="1"/>
        <end position="257"/>
    </location>
</feature>
<organism>
    <name type="scientific">Salmonella agona (strain SL483)</name>
    <dbReference type="NCBI Taxonomy" id="454166"/>
    <lineage>
        <taxon>Bacteria</taxon>
        <taxon>Pseudomonadati</taxon>
        <taxon>Pseudomonadota</taxon>
        <taxon>Gammaproteobacteria</taxon>
        <taxon>Enterobacterales</taxon>
        <taxon>Enterobacteriaceae</taxon>
        <taxon>Salmonella</taxon>
    </lineage>
</organism>
<sequence>MLILISPAKTLDYQSPLATTRYTQPELLDHSQQLIQQARQLSAPQISRLMGISDKLADLNATRFHDWQPHFTPDNARQAILAFKGDVYTGLQAETFNDADFDFAQQHLRMLSGLYGVLRPLDLMQPYRLEMGIRLENPRGKDLYQFWGDIITDKLNEALEAQGDRVVVNLASEEYFKSVKPKKLNAELIKPVFLDEKNGKFKVVSFYAKKARGLMSRFIIENRLTKPEQLIAFDREGYFFDEETSTQDELVFKRYEQ</sequence>
<protein>
    <recommendedName>
        <fullName evidence="1">UPF0246 protein YaaA</fullName>
    </recommendedName>
</protein>
<comment type="similarity">
    <text evidence="1">Belongs to the UPF0246 family.</text>
</comment>
<dbReference type="EMBL" id="CP001138">
    <property type="protein sequence ID" value="ACH50610.1"/>
    <property type="molecule type" value="Genomic_DNA"/>
</dbReference>
<dbReference type="RefSeq" id="WP_000906173.1">
    <property type="nucleotide sequence ID" value="NC_011149.1"/>
</dbReference>
<dbReference type="SMR" id="B5F6C4"/>
<dbReference type="KEGG" id="sea:SeAg_B0005"/>
<dbReference type="HOGENOM" id="CLU_061989_0_0_6"/>
<dbReference type="Proteomes" id="UP000008819">
    <property type="component" value="Chromosome"/>
</dbReference>
<dbReference type="GO" id="GO:0005829">
    <property type="term" value="C:cytosol"/>
    <property type="evidence" value="ECO:0007669"/>
    <property type="project" value="TreeGrafter"/>
</dbReference>
<dbReference type="GO" id="GO:0033194">
    <property type="term" value="P:response to hydroperoxide"/>
    <property type="evidence" value="ECO:0007669"/>
    <property type="project" value="TreeGrafter"/>
</dbReference>
<dbReference type="HAMAP" id="MF_00652">
    <property type="entry name" value="UPF0246"/>
    <property type="match status" value="1"/>
</dbReference>
<dbReference type="InterPro" id="IPR005583">
    <property type="entry name" value="YaaA"/>
</dbReference>
<dbReference type="NCBIfam" id="NF002541">
    <property type="entry name" value="PRK02101.1-1"/>
    <property type="match status" value="1"/>
</dbReference>
<dbReference type="NCBIfam" id="NF002542">
    <property type="entry name" value="PRK02101.1-3"/>
    <property type="match status" value="1"/>
</dbReference>
<dbReference type="PANTHER" id="PTHR30283:SF4">
    <property type="entry name" value="PEROXIDE STRESS RESISTANCE PROTEIN YAAA"/>
    <property type="match status" value="1"/>
</dbReference>
<dbReference type="PANTHER" id="PTHR30283">
    <property type="entry name" value="PEROXIDE STRESS RESPONSE PROTEIN YAAA"/>
    <property type="match status" value="1"/>
</dbReference>
<dbReference type="Pfam" id="PF03883">
    <property type="entry name" value="H2O2_YaaD"/>
    <property type="match status" value="1"/>
</dbReference>
<accession>B5F6C4</accession>
<proteinExistence type="inferred from homology"/>
<name>YAAA_SALA4</name>